<proteinExistence type="inferred from homology"/>
<comment type="function">
    <text evidence="1">Catalyzes the 2'-O-methylation of the ribose of cytidine 1402 (C1402) in 16S rRNA.</text>
</comment>
<comment type="catalytic activity">
    <reaction evidence="1">
        <text>cytidine(1402) in 16S rRNA + S-adenosyl-L-methionine = 2'-O-methylcytidine(1402) in 16S rRNA + S-adenosyl-L-homocysteine + H(+)</text>
        <dbReference type="Rhea" id="RHEA:42924"/>
        <dbReference type="Rhea" id="RHEA-COMP:10285"/>
        <dbReference type="Rhea" id="RHEA-COMP:10286"/>
        <dbReference type="ChEBI" id="CHEBI:15378"/>
        <dbReference type="ChEBI" id="CHEBI:57856"/>
        <dbReference type="ChEBI" id="CHEBI:59789"/>
        <dbReference type="ChEBI" id="CHEBI:74495"/>
        <dbReference type="ChEBI" id="CHEBI:82748"/>
        <dbReference type="EC" id="2.1.1.198"/>
    </reaction>
</comment>
<comment type="subcellular location">
    <subcellularLocation>
        <location evidence="1">Cytoplasm</location>
    </subcellularLocation>
</comment>
<comment type="similarity">
    <text evidence="1">Belongs to the methyltransferase superfamily. RsmI family.</text>
</comment>
<sequence length="279" mass="30830">MGILYLVATPIGNLGDMTPRAVETLQTVDLIAAEDTRHTGKLLQHFQITTPQISYHDHNRHGRTQELLAKLQAGQNIALVSDAGTPGISDPGQELVAACGEANIEVIPIPGATALIAALISSGLATDRFVFEGFLSTKNRPRQQLLQSLAQEERTIILYEAPHRLLATLTDLQTFLGQERSLTVARELTKYHEQFWRGTLQTAIAYFTENTPKGEFCLVIAGATPEDRPSFSEENLRDELRSLMAKGLTRSQASRQLAEETKLPRRQLYQLSLELEADG</sequence>
<protein>
    <recommendedName>
        <fullName evidence="1">Ribosomal RNA small subunit methyltransferase I</fullName>
        <ecNumber evidence="1">2.1.1.198</ecNumber>
    </recommendedName>
    <alternativeName>
        <fullName evidence="1">16S rRNA 2'-O-ribose C1402 methyltransferase</fullName>
    </alternativeName>
    <alternativeName>
        <fullName evidence="1">rRNA (cytidine-2'-O-)-methyltransferase RsmI</fullName>
    </alternativeName>
</protein>
<gene>
    <name evidence="1" type="primary">rsmI</name>
    <name type="ordered locus">sll0818</name>
</gene>
<accession>P74038</accession>
<organism>
    <name type="scientific">Synechocystis sp. (strain ATCC 27184 / PCC 6803 / Kazusa)</name>
    <dbReference type="NCBI Taxonomy" id="1111708"/>
    <lineage>
        <taxon>Bacteria</taxon>
        <taxon>Bacillati</taxon>
        <taxon>Cyanobacteriota</taxon>
        <taxon>Cyanophyceae</taxon>
        <taxon>Synechococcales</taxon>
        <taxon>Merismopediaceae</taxon>
        <taxon>Synechocystis</taxon>
    </lineage>
</organism>
<reference key="1">
    <citation type="journal article" date="1996" name="DNA Res.">
        <title>Sequence analysis of the genome of the unicellular cyanobacterium Synechocystis sp. strain PCC6803. II. Sequence determination of the entire genome and assignment of potential protein-coding regions.</title>
        <authorList>
            <person name="Kaneko T."/>
            <person name="Sato S."/>
            <person name="Kotani H."/>
            <person name="Tanaka A."/>
            <person name="Asamizu E."/>
            <person name="Nakamura Y."/>
            <person name="Miyajima N."/>
            <person name="Hirosawa M."/>
            <person name="Sugiura M."/>
            <person name="Sasamoto S."/>
            <person name="Kimura T."/>
            <person name="Hosouchi T."/>
            <person name="Matsuno A."/>
            <person name="Muraki A."/>
            <person name="Nakazaki N."/>
            <person name="Naruo K."/>
            <person name="Okumura S."/>
            <person name="Shimpo S."/>
            <person name="Takeuchi C."/>
            <person name="Wada T."/>
            <person name="Watanabe A."/>
            <person name="Yamada M."/>
            <person name="Yasuda M."/>
            <person name="Tabata S."/>
        </authorList>
    </citation>
    <scope>NUCLEOTIDE SEQUENCE [LARGE SCALE GENOMIC DNA]</scope>
    <source>
        <strain>ATCC 27184 / PCC 6803 / Kazusa</strain>
    </source>
</reference>
<keyword id="KW-0963">Cytoplasm</keyword>
<keyword id="KW-0489">Methyltransferase</keyword>
<keyword id="KW-1185">Reference proteome</keyword>
<keyword id="KW-0698">rRNA processing</keyword>
<keyword id="KW-0949">S-adenosyl-L-methionine</keyword>
<keyword id="KW-0808">Transferase</keyword>
<feature type="chain" id="PRO_0000211958" description="Ribosomal RNA small subunit methyltransferase I">
    <location>
        <begin position="1"/>
        <end position="279"/>
    </location>
</feature>
<evidence type="ECO:0000255" key="1">
    <source>
        <dbReference type="HAMAP-Rule" id="MF_01877"/>
    </source>
</evidence>
<dbReference type="EC" id="2.1.1.198" evidence="1"/>
<dbReference type="EMBL" id="BA000022">
    <property type="protein sequence ID" value="BAA18113.1"/>
    <property type="molecule type" value="Genomic_DNA"/>
</dbReference>
<dbReference type="PIR" id="S75552">
    <property type="entry name" value="S75552"/>
</dbReference>
<dbReference type="SMR" id="P74038"/>
<dbReference type="FunCoup" id="P74038">
    <property type="interactions" value="381"/>
</dbReference>
<dbReference type="IntAct" id="P74038">
    <property type="interactions" value="1"/>
</dbReference>
<dbReference type="STRING" id="1148.gene:10498984"/>
<dbReference type="PaxDb" id="1148-1653197"/>
<dbReference type="EnsemblBacteria" id="BAA18113">
    <property type="protein sequence ID" value="BAA18113"/>
    <property type="gene ID" value="BAA18113"/>
</dbReference>
<dbReference type="KEGG" id="syn:sll0818"/>
<dbReference type="eggNOG" id="COG0313">
    <property type="taxonomic scope" value="Bacteria"/>
</dbReference>
<dbReference type="InParanoid" id="P74038"/>
<dbReference type="PhylomeDB" id="P74038"/>
<dbReference type="Proteomes" id="UP000001425">
    <property type="component" value="Chromosome"/>
</dbReference>
<dbReference type="GO" id="GO:0005737">
    <property type="term" value="C:cytoplasm"/>
    <property type="evidence" value="ECO:0007669"/>
    <property type="project" value="UniProtKB-SubCell"/>
</dbReference>
<dbReference type="GO" id="GO:0070677">
    <property type="term" value="F:rRNA (cytosine-2'-O-)-methyltransferase activity"/>
    <property type="evidence" value="ECO:0007669"/>
    <property type="project" value="UniProtKB-UniRule"/>
</dbReference>
<dbReference type="GO" id="GO:0004851">
    <property type="term" value="F:uroporphyrin-III C-methyltransferase activity"/>
    <property type="evidence" value="ECO:0000318"/>
    <property type="project" value="GO_Central"/>
</dbReference>
<dbReference type="GO" id="GO:0019354">
    <property type="term" value="P:siroheme biosynthetic process"/>
    <property type="evidence" value="ECO:0000318"/>
    <property type="project" value="GO_Central"/>
</dbReference>
<dbReference type="CDD" id="cd11648">
    <property type="entry name" value="RsmI"/>
    <property type="match status" value="1"/>
</dbReference>
<dbReference type="FunFam" id="3.30.950.10:FF:000002">
    <property type="entry name" value="Ribosomal RNA small subunit methyltransferase I"/>
    <property type="match status" value="1"/>
</dbReference>
<dbReference type="FunFam" id="3.40.1010.10:FF:000002">
    <property type="entry name" value="Ribosomal RNA small subunit methyltransferase I"/>
    <property type="match status" value="1"/>
</dbReference>
<dbReference type="Gene3D" id="3.40.1010.10">
    <property type="entry name" value="Cobalt-precorrin-4 Transmethylase, Domain 1"/>
    <property type="match status" value="1"/>
</dbReference>
<dbReference type="Gene3D" id="3.30.950.10">
    <property type="entry name" value="Methyltransferase, Cobalt-precorrin-4 Transmethylase, Domain 2"/>
    <property type="match status" value="1"/>
</dbReference>
<dbReference type="HAMAP" id="MF_01877">
    <property type="entry name" value="16SrRNA_methyltr_I"/>
    <property type="match status" value="1"/>
</dbReference>
<dbReference type="InterPro" id="IPR000878">
    <property type="entry name" value="4pyrrol_Mease"/>
</dbReference>
<dbReference type="InterPro" id="IPR035996">
    <property type="entry name" value="4pyrrol_Methylase_sf"/>
</dbReference>
<dbReference type="InterPro" id="IPR014777">
    <property type="entry name" value="4pyrrole_Mease_sub1"/>
</dbReference>
<dbReference type="InterPro" id="IPR014776">
    <property type="entry name" value="4pyrrole_Mease_sub2"/>
</dbReference>
<dbReference type="InterPro" id="IPR008189">
    <property type="entry name" value="rRNA_ssu_MeTfrase_I"/>
</dbReference>
<dbReference type="InterPro" id="IPR018063">
    <property type="entry name" value="SAM_MeTrfase_RsmI_CS"/>
</dbReference>
<dbReference type="NCBIfam" id="TIGR00096">
    <property type="entry name" value="16S rRNA (cytidine(1402)-2'-O)-methyltransferase"/>
    <property type="match status" value="1"/>
</dbReference>
<dbReference type="PANTHER" id="PTHR46111">
    <property type="entry name" value="RIBOSOMAL RNA SMALL SUBUNIT METHYLTRANSFERASE I"/>
    <property type="match status" value="1"/>
</dbReference>
<dbReference type="PANTHER" id="PTHR46111:SF1">
    <property type="entry name" value="RIBOSOMAL RNA SMALL SUBUNIT METHYLTRANSFERASE I"/>
    <property type="match status" value="1"/>
</dbReference>
<dbReference type="Pfam" id="PF00590">
    <property type="entry name" value="TP_methylase"/>
    <property type="match status" value="1"/>
</dbReference>
<dbReference type="PIRSF" id="PIRSF005917">
    <property type="entry name" value="MTase_YraL"/>
    <property type="match status" value="1"/>
</dbReference>
<dbReference type="SUPFAM" id="SSF53790">
    <property type="entry name" value="Tetrapyrrole methylase"/>
    <property type="match status" value="1"/>
</dbReference>
<dbReference type="PROSITE" id="PS01296">
    <property type="entry name" value="RSMI"/>
    <property type="match status" value="1"/>
</dbReference>
<name>RSMI_SYNY3</name>